<gene>
    <name evidence="1" type="primary">apt</name>
    <name type="ordered locus">Teth514_1466</name>
</gene>
<dbReference type="EC" id="2.4.2.7" evidence="1"/>
<dbReference type="EMBL" id="CP000923">
    <property type="protein sequence ID" value="ABY92755.1"/>
    <property type="molecule type" value="Genomic_DNA"/>
</dbReference>
<dbReference type="RefSeq" id="WP_009052297.1">
    <property type="nucleotide sequence ID" value="NC_010320.1"/>
</dbReference>
<dbReference type="SMR" id="B0K0N0"/>
<dbReference type="KEGG" id="tex:Teth514_1466"/>
<dbReference type="HOGENOM" id="CLU_063339_3_0_9"/>
<dbReference type="UniPathway" id="UPA00588">
    <property type="reaction ID" value="UER00646"/>
</dbReference>
<dbReference type="Proteomes" id="UP000002155">
    <property type="component" value="Chromosome"/>
</dbReference>
<dbReference type="GO" id="GO:0005737">
    <property type="term" value="C:cytoplasm"/>
    <property type="evidence" value="ECO:0007669"/>
    <property type="project" value="UniProtKB-SubCell"/>
</dbReference>
<dbReference type="GO" id="GO:0002055">
    <property type="term" value="F:adenine binding"/>
    <property type="evidence" value="ECO:0007669"/>
    <property type="project" value="TreeGrafter"/>
</dbReference>
<dbReference type="GO" id="GO:0003999">
    <property type="term" value="F:adenine phosphoribosyltransferase activity"/>
    <property type="evidence" value="ECO:0007669"/>
    <property type="project" value="UniProtKB-UniRule"/>
</dbReference>
<dbReference type="GO" id="GO:0016208">
    <property type="term" value="F:AMP binding"/>
    <property type="evidence" value="ECO:0007669"/>
    <property type="project" value="TreeGrafter"/>
</dbReference>
<dbReference type="GO" id="GO:0006168">
    <property type="term" value="P:adenine salvage"/>
    <property type="evidence" value="ECO:0007669"/>
    <property type="project" value="InterPro"/>
</dbReference>
<dbReference type="GO" id="GO:0044209">
    <property type="term" value="P:AMP salvage"/>
    <property type="evidence" value="ECO:0007669"/>
    <property type="project" value="UniProtKB-UniRule"/>
</dbReference>
<dbReference type="GO" id="GO:0006166">
    <property type="term" value="P:purine ribonucleoside salvage"/>
    <property type="evidence" value="ECO:0007669"/>
    <property type="project" value="UniProtKB-KW"/>
</dbReference>
<dbReference type="CDD" id="cd06223">
    <property type="entry name" value="PRTases_typeI"/>
    <property type="match status" value="1"/>
</dbReference>
<dbReference type="FunFam" id="3.40.50.2020:FF:000004">
    <property type="entry name" value="Adenine phosphoribosyltransferase"/>
    <property type="match status" value="1"/>
</dbReference>
<dbReference type="Gene3D" id="3.40.50.2020">
    <property type="match status" value="1"/>
</dbReference>
<dbReference type="HAMAP" id="MF_00004">
    <property type="entry name" value="Aden_phosphoribosyltr"/>
    <property type="match status" value="1"/>
</dbReference>
<dbReference type="InterPro" id="IPR005764">
    <property type="entry name" value="Ade_phspho_trans"/>
</dbReference>
<dbReference type="InterPro" id="IPR000836">
    <property type="entry name" value="PRibTrfase_dom"/>
</dbReference>
<dbReference type="InterPro" id="IPR029057">
    <property type="entry name" value="PRTase-like"/>
</dbReference>
<dbReference type="InterPro" id="IPR050054">
    <property type="entry name" value="UPRTase/APRTase"/>
</dbReference>
<dbReference type="NCBIfam" id="TIGR01090">
    <property type="entry name" value="apt"/>
    <property type="match status" value="1"/>
</dbReference>
<dbReference type="NCBIfam" id="NF002633">
    <property type="entry name" value="PRK02304.1-2"/>
    <property type="match status" value="1"/>
</dbReference>
<dbReference type="NCBIfam" id="NF002634">
    <property type="entry name" value="PRK02304.1-3"/>
    <property type="match status" value="1"/>
</dbReference>
<dbReference type="NCBIfam" id="NF002636">
    <property type="entry name" value="PRK02304.1-5"/>
    <property type="match status" value="1"/>
</dbReference>
<dbReference type="PANTHER" id="PTHR32315">
    <property type="entry name" value="ADENINE PHOSPHORIBOSYLTRANSFERASE"/>
    <property type="match status" value="1"/>
</dbReference>
<dbReference type="PANTHER" id="PTHR32315:SF3">
    <property type="entry name" value="ADENINE PHOSPHORIBOSYLTRANSFERASE"/>
    <property type="match status" value="1"/>
</dbReference>
<dbReference type="Pfam" id="PF00156">
    <property type="entry name" value="Pribosyltran"/>
    <property type="match status" value="1"/>
</dbReference>
<dbReference type="SUPFAM" id="SSF53271">
    <property type="entry name" value="PRTase-like"/>
    <property type="match status" value="1"/>
</dbReference>
<dbReference type="PROSITE" id="PS00103">
    <property type="entry name" value="PUR_PYR_PR_TRANSFER"/>
    <property type="match status" value="1"/>
</dbReference>
<protein>
    <recommendedName>
        <fullName evidence="1">Adenine phosphoribosyltransferase</fullName>
        <shortName evidence="1">APRT</shortName>
        <ecNumber evidence="1">2.4.2.7</ecNumber>
    </recommendedName>
</protein>
<proteinExistence type="inferred from homology"/>
<reference key="1">
    <citation type="submission" date="2008-01" db="EMBL/GenBank/DDBJ databases">
        <title>Complete sequence of Thermoanaerobacter sp. X514.</title>
        <authorList>
            <consortium name="US DOE Joint Genome Institute"/>
            <person name="Copeland A."/>
            <person name="Lucas S."/>
            <person name="Lapidus A."/>
            <person name="Barry K."/>
            <person name="Glavina del Rio T."/>
            <person name="Dalin E."/>
            <person name="Tice H."/>
            <person name="Pitluck S."/>
            <person name="Bruce D."/>
            <person name="Goodwin L."/>
            <person name="Saunders E."/>
            <person name="Brettin T."/>
            <person name="Detter J.C."/>
            <person name="Han C."/>
            <person name="Schmutz J."/>
            <person name="Larimer F."/>
            <person name="Land M."/>
            <person name="Hauser L."/>
            <person name="Kyrpides N."/>
            <person name="Kim E."/>
            <person name="Hemme C."/>
            <person name="Fields M.W."/>
            <person name="He Z."/>
            <person name="Zhou J."/>
            <person name="Richardson P."/>
        </authorList>
    </citation>
    <scope>NUCLEOTIDE SEQUENCE [LARGE SCALE GENOMIC DNA]</scope>
    <source>
        <strain>X514</strain>
    </source>
</reference>
<name>APT_THEPX</name>
<feature type="chain" id="PRO_1000089014" description="Adenine phosphoribosyltransferase">
    <location>
        <begin position="1"/>
        <end position="173"/>
    </location>
</feature>
<accession>B0K0N0</accession>
<sequence>MTLEEIKMMIREIPDFPKKGIKFKDITPVLKDAQAFNYSIEMLAKALEGRKFDLIAAPEARGFLFGAPLAYRLGVGFVPVRKPGKLPAETLSYEYELEYGTDSLEIHKDAVLEGQRVVIVDDLLATGGTIYASAKLVEKLGGIVDSIIFLSELTFLDGRKKLDGYDIISLIKF</sequence>
<keyword id="KW-0963">Cytoplasm</keyword>
<keyword id="KW-0328">Glycosyltransferase</keyword>
<keyword id="KW-0660">Purine salvage</keyword>
<keyword id="KW-0808">Transferase</keyword>
<comment type="function">
    <text evidence="1">Catalyzes a salvage reaction resulting in the formation of AMP, that is energically less costly than de novo synthesis.</text>
</comment>
<comment type="catalytic activity">
    <reaction evidence="1">
        <text>AMP + diphosphate = 5-phospho-alpha-D-ribose 1-diphosphate + adenine</text>
        <dbReference type="Rhea" id="RHEA:16609"/>
        <dbReference type="ChEBI" id="CHEBI:16708"/>
        <dbReference type="ChEBI" id="CHEBI:33019"/>
        <dbReference type="ChEBI" id="CHEBI:58017"/>
        <dbReference type="ChEBI" id="CHEBI:456215"/>
        <dbReference type="EC" id="2.4.2.7"/>
    </reaction>
</comment>
<comment type="pathway">
    <text evidence="1">Purine metabolism; AMP biosynthesis via salvage pathway; AMP from adenine: step 1/1.</text>
</comment>
<comment type="subunit">
    <text evidence="1">Homodimer.</text>
</comment>
<comment type="subcellular location">
    <subcellularLocation>
        <location evidence="1">Cytoplasm</location>
    </subcellularLocation>
</comment>
<comment type="similarity">
    <text evidence="1">Belongs to the purine/pyrimidine phosphoribosyltransferase family.</text>
</comment>
<organism>
    <name type="scientific">Thermoanaerobacter sp. (strain X514)</name>
    <dbReference type="NCBI Taxonomy" id="399726"/>
    <lineage>
        <taxon>Bacteria</taxon>
        <taxon>Bacillati</taxon>
        <taxon>Bacillota</taxon>
        <taxon>Clostridia</taxon>
        <taxon>Thermoanaerobacterales</taxon>
        <taxon>Thermoanaerobacteraceae</taxon>
        <taxon>Thermoanaerobacter</taxon>
    </lineage>
</organism>
<evidence type="ECO:0000255" key="1">
    <source>
        <dbReference type="HAMAP-Rule" id="MF_00004"/>
    </source>
</evidence>